<protein>
    <recommendedName>
        <fullName evidence="1">tRNA uridine 5-carboxymethylaminomethyl modification enzyme MnmG</fullName>
    </recommendedName>
    <alternativeName>
        <fullName evidence="1">Glucose-inhibited division protein A</fullName>
    </alternativeName>
</protein>
<organism>
    <name type="scientific">Staphylococcus aureus (strain USA300 / TCH1516)</name>
    <dbReference type="NCBI Taxonomy" id="451516"/>
    <lineage>
        <taxon>Bacteria</taxon>
        <taxon>Bacillati</taxon>
        <taxon>Bacillota</taxon>
        <taxon>Bacilli</taxon>
        <taxon>Bacillales</taxon>
        <taxon>Staphylococcaceae</taxon>
        <taxon>Staphylococcus</taxon>
    </lineage>
</organism>
<keyword id="KW-0963">Cytoplasm</keyword>
<keyword id="KW-0274">FAD</keyword>
<keyword id="KW-0285">Flavoprotein</keyword>
<keyword id="KW-0520">NAD</keyword>
<keyword id="KW-0819">tRNA processing</keyword>
<evidence type="ECO:0000255" key="1">
    <source>
        <dbReference type="HAMAP-Rule" id="MF_00129"/>
    </source>
</evidence>
<name>MNMG_STAAT</name>
<comment type="function">
    <text evidence="1">NAD-binding protein involved in the addition of a carboxymethylaminomethyl (cmnm) group at the wobble position (U34) of certain tRNAs, forming tRNA-cmnm(5)s(2)U34.</text>
</comment>
<comment type="cofactor">
    <cofactor evidence="1">
        <name>FAD</name>
        <dbReference type="ChEBI" id="CHEBI:57692"/>
    </cofactor>
</comment>
<comment type="subunit">
    <text evidence="1">Homodimer. Heterotetramer of two MnmE and two MnmG subunits.</text>
</comment>
<comment type="subcellular location">
    <subcellularLocation>
        <location evidence="1">Cytoplasm</location>
    </subcellularLocation>
</comment>
<comment type="similarity">
    <text evidence="1">Belongs to the MnmG family.</text>
</comment>
<gene>
    <name evidence="1" type="primary">mnmG</name>
    <name evidence="1" type="synonym">gidA</name>
    <name type="ordered locus">USA300HOU_2714</name>
</gene>
<reference key="1">
    <citation type="journal article" date="2007" name="BMC Microbiol.">
        <title>Subtle genetic changes enhance virulence of methicillin resistant and sensitive Staphylococcus aureus.</title>
        <authorList>
            <person name="Highlander S.K."/>
            <person name="Hulten K.G."/>
            <person name="Qin X."/>
            <person name="Jiang H."/>
            <person name="Yerrapragada S."/>
            <person name="Mason E.O. Jr."/>
            <person name="Shang Y."/>
            <person name="Williams T.M."/>
            <person name="Fortunov R.M."/>
            <person name="Liu Y."/>
            <person name="Igboeli O."/>
            <person name="Petrosino J."/>
            <person name="Tirumalai M."/>
            <person name="Uzman A."/>
            <person name="Fox G.E."/>
            <person name="Cardenas A.M."/>
            <person name="Muzny D.M."/>
            <person name="Hemphill L."/>
            <person name="Ding Y."/>
            <person name="Dugan S."/>
            <person name="Blyth P.R."/>
            <person name="Buhay C.J."/>
            <person name="Dinh H.H."/>
            <person name="Hawes A.C."/>
            <person name="Holder M."/>
            <person name="Kovar C.L."/>
            <person name="Lee S.L."/>
            <person name="Liu W."/>
            <person name="Nazareth L.V."/>
            <person name="Wang Q."/>
            <person name="Zhou J."/>
            <person name="Kaplan S.L."/>
            <person name="Weinstock G.M."/>
        </authorList>
    </citation>
    <scope>NUCLEOTIDE SEQUENCE [LARGE SCALE GENOMIC DNA]</scope>
    <source>
        <strain>USA300 / TCH1516</strain>
    </source>
</reference>
<sequence>MVQEYDVIVIGAGHAGVEAGLASARRGAKTLMLTINLDNIAFMPCNPSVGGPAKGIVVREIDALGGQMAKTIDKTHIQMRMLNTGKGPAVRALRAQADKVLYQQEMKRVIEDEENLHIMQGMVDELIIEDNEVKGVRTNIGTEYLSKAVIITTGTFLRGEIILGNMKYSSGPNHQLPSITLSDNLRELGFDIVRFKTGTPPRVNSKTIDYSKTEIQPGDDVGRAFSFETTEYILDQLPCWLTYTNAETHKVIDDNLHLSAMYSGMIKGTGPRYCPSIEDKFVRFNDKPRHQLFLEPEGRNTNEVYVQGLSTSLPEHVQRQMLETIPGLEKADMMRAGYAIEYDAIVPTQLWPTLETKMIKNLYTAGQINGTSGYEEAAGQGLMAGINAAGKVLNTGEKILSRSDAYIGVLIDDLVTKGTNEPYRLLTSRAEYRLLLRHDNADLRLTDMGYELGMISEERYARFNEKRQQIDAEIKRLSDIRIKPNEHTQAIIEQHGGSRLKDGILAIDLLRRPEMTYDIILELLEEEHQLNADVEEQVEIQTKYEGYINKSLQQVEKVKRMEEKKIPEDLDYSKIDSLATEAREKLSEVKPLNIAQASRISGVNPADISILLIYLEQGKLQRVSD</sequence>
<accession>A8YYS0</accession>
<dbReference type="EMBL" id="CP000730">
    <property type="protein sequence ID" value="ABX30700.1"/>
    <property type="molecule type" value="Genomic_DNA"/>
</dbReference>
<dbReference type="RefSeq" id="WP_000249662.1">
    <property type="nucleotide sequence ID" value="NC_010079.1"/>
</dbReference>
<dbReference type="SMR" id="A8YYS0"/>
<dbReference type="KEGG" id="sax:USA300HOU_2714"/>
<dbReference type="HOGENOM" id="CLU_007831_2_2_9"/>
<dbReference type="GO" id="GO:0005829">
    <property type="term" value="C:cytosol"/>
    <property type="evidence" value="ECO:0007669"/>
    <property type="project" value="TreeGrafter"/>
</dbReference>
<dbReference type="GO" id="GO:0050660">
    <property type="term" value="F:flavin adenine dinucleotide binding"/>
    <property type="evidence" value="ECO:0007669"/>
    <property type="project" value="UniProtKB-UniRule"/>
</dbReference>
<dbReference type="GO" id="GO:0030488">
    <property type="term" value="P:tRNA methylation"/>
    <property type="evidence" value="ECO:0007669"/>
    <property type="project" value="TreeGrafter"/>
</dbReference>
<dbReference type="GO" id="GO:0002098">
    <property type="term" value="P:tRNA wobble uridine modification"/>
    <property type="evidence" value="ECO:0007669"/>
    <property type="project" value="InterPro"/>
</dbReference>
<dbReference type="FunFam" id="1.10.10.1800:FF:000001">
    <property type="entry name" value="tRNA uridine 5-carboxymethylaminomethyl modification enzyme MnmG"/>
    <property type="match status" value="1"/>
</dbReference>
<dbReference type="FunFam" id="1.10.150.570:FF:000001">
    <property type="entry name" value="tRNA uridine 5-carboxymethylaminomethyl modification enzyme MnmG"/>
    <property type="match status" value="1"/>
</dbReference>
<dbReference type="FunFam" id="3.50.50.60:FF:000002">
    <property type="entry name" value="tRNA uridine 5-carboxymethylaminomethyl modification enzyme MnmG"/>
    <property type="match status" value="1"/>
</dbReference>
<dbReference type="FunFam" id="3.50.50.60:FF:000063">
    <property type="entry name" value="tRNA uridine 5-carboxymethylaminomethyl modification enzyme MnmG"/>
    <property type="match status" value="1"/>
</dbReference>
<dbReference type="Gene3D" id="3.50.50.60">
    <property type="entry name" value="FAD/NAD(P)-binding domain"/>
    <property type="match status" value="2"/>
</dbReference>
<dbReference type="Gene3D" id="1.10.150.570">
    <property type="entry name" value="GidA associated domain, C-terminal subdomain"/>
    <property type="match status" value="1"/>
</dbReference>
<dbReference type="Gene3D" id="1.10.10.1800">
    <property type="entry name" value="tRNA uridine 5-carboxymethylaminomethyl modification enzyme MnmG/GidA"/>
    <property type="match status" value="1"/>
</dbReference>
<dbReference type="HAMAP" id="MF_00129">
    <property type="entry name" value="MnmG_GidA"/>
    <property type="match status" value="1"/>
</dbReference>
<dbReference type="InterPro" id="IPR036188">
    <property type="entry name" value="FAD/NAD-bd_sf"/>
</dbReference>
<dbReference type="InterPro" id="IPR049312">
    <property type="entry name" value="GIDA_C_N"/>
</dbReference>
<dbReference type="InterPro" id="IPR004416">
    <property type="entry name" value="MnmG"/>
</dbReference>
<dbReference type="InterPro" id="IPR002218">
    <property type="entry name" value="MnmG-rel"/>
</dbReference>
<dbReference type="InterPro" id="IPR020595">
    <property type="entry name" value="MnmG-rel_CS"/>
</dbReference>
<dbReference type="InterPro" id="IPR026904">
    <property type="entry name" value="MnmG_C"/>
</dbReference>
<dbReference type="InterPro" id="IPR047001">
    <property type="entry name" value="MnmG_C_subdom"/>
</dbReference>
<dbReference type="InterPro" id="IPR044920">
    <property type="entry name" value="MnmG_C_subdom_sf"/>
</dbReference>
<dbReference type="InterPro" id="IPR040131">
    <property type="entry name" value="MnmG_N"/>
</dbReference>
<dbReference type="NCBIfam" id="TIGR00136">
    <property type="entry name" value="mnmG_gidA"/>
    <property type="match status" value="1"/>
</dbReference>
<dbReference type="PANTHER" id="PTHR11806">
    <property type="entry name" value="GLUCOSE INHIBITED DIVISION PROTEIN A"/>
    <property type="match status" value="1"/>
</dbReference>
<dbReference type="PANTHER" id="PTHR11806:SF0">
    <property type="entry name" value="PROTEIN MTO1 HOMOLOG, MITOCHONDRIAL"/>
    <property type="match status" value="1"/>
</dbReference>
<dbReference type="Pfam" id="PF01134">
    <property type="entry name" value="GIDA"/>
    <property type="match status" value="1"/>
</dbReference>
<dbReference type="Pfam" id="PF21680">
    <property type="entry name" value="GIDA_C_1st"/>
    <property type="match status" value="1"/>
</dbReference>
<dbReference type="Pfam" id="PF13932">
    <property type="entry name" value="SAM_GIDA_C"/>
    <property type="match status" value="1"/>
</dbReference>
<dbReference type="PRINTS" id="PR00411">
    <property type="entry name" value="PNDRDTASEI"/>
</dbReference>
<dbReference type="SMART" id="SM01228">
    <property type="entry name" value="GIDA_assoc_3"/>
    <property type="match status" value="1"/>
</dbReference>
<dbReference type="SUPFAM" id="SSF51905">
    <property type="entry name" value="FAD/NAD(P)-binding domain"/>
    <property type="match status" value="1"/>
</dbReference>
<dbReference type="PROSITE" id="PS01280">
    <property type="entry name" value="GIDA_1"/>
    <property type="match status" value="1"/>
</dbReference>
<dbReference type="PROSITE" id="PS01281">
    <property type="entry name" value="GIDA_2"/>
    <property type="match status" value="1"/>
</dbReference>
<feature type="chain" id="PRO_1000076336" description="tRNA uridine 5-carboxymethylaminomethyl modification enzyme MnmG">
    <location>
        <begin position="1"/>
        <end position="625"/>
    </location>
</feature>
<feature type="binding site" evidence="1">
    <location>
        <begin position="11"/>
        <end position="16"/>
    </location>
    <ligand>
        <name>FAD</name>
        <dbReference type="ChEBI" id="CHEBI:57692"/>
    </ligand>
</feature>
<feature type="binding site" evidence="1">
    <location>
        <position position="123"/>
    </location>
    <ligand>
        <name>FAD</name>
        <dbReference type="ChEBI" id="CHEBI:57692"/>
    </ligand>
</feature>
<feature type="binding site" evidence="1">
    <location>
        <position position="178"/>
    </location>
    <ligand>
        <name>FAD</name>
        <dbReference type="ChEBI" id="CHEBI:57692"/>
    </ligand>
</feature>
<feature type="binding site" evidence="1">
    <location>
        <begin position="270"/>
        <end position="284"/>
    </location>
    <ligand>
        <name>NAD(+)</name>
        <dbReference type="ChEBI" id="CHEBI:57540"/>
    </ligand>
</feature>
<feature type="binding site" evidence="1">
    <location>
        <position position="367"/>
    </location>
    <ligand>
        <name>FAD</name>
        <dbReference type="ChEBI" id="CHEBI:57692"/>
    </ligand>
</feature>
<proteinExistence type="inferred from homology"/>